<protein>
    <recommendedName>
        <fullName evidence="1">3-deoxy-manno-octulosonate cytidylyltransferase</fullName>
        <ecNumber evidence="1">2.7.7.38</ecNumber>
    </recommendedName>
    <alternativeName>
        <fullName evidence="1">CMP-2-keto-3-deoxyoctulosonic acid synthase</fullName>
        <shortName evidence="1">CKS</shortName>
        <shortName evidence="1">CMP-KDO synthase</shortName>
    </alternativeName>
</protein>
<gene>
    <name evidence="1" type="primary">kdsB</name>
    <name type="ordered locus">Cpha266_2079</name>
</gene>
<sequence>MKAVILIPARLDSSRLEKKMLADLQGEPLIVRTWRQALKSRLADRVVVATDNDEIASVLQAYGAEVVMTSPHARCGTERIAEAAKSIEGDIYVNLQGDEPLISPENIDLALEPFFTETPPDCSTLVFPLLPEDFRQLEDINTVKVVMDNAGYALYFSRSPIPYQRQISTSTECYRHIGLYAFRADVLHAFASLAPSMLELAESLEQLRLLENGYRIRCVKTTRDAPGVNTYEDLELVRQLLRNAPVQ</sequence>
<accession>A1BI64</accession>
<keyword id="KW-0963">Cytoplasm</keyword>
<keyword id="KW-0448">Lipopolysaccharide biosynthesis</keyword>
<keyword id="KW-0548">Nucleotidyltransferase</keyword>
<keyword id="KW-1185">Reference proteome</keyword>
<keyword id="KW-0808">Transferase</keyword>
<dbReference type="EC" id="2.7.7.38" evidence="1"/>
<dbReference type="EMBL" id="CP000492">
    <property type="protein sequence ID" value="ABL66091.1"/>
    <property type="molecule type" value="Genomic_DNA"/>
</dbReference>
<dbReference type="RefSeq" id="WP_011745893.1">
    <property type="nucleotide sequence ID" value="NC_008639.1"/>
</dbReference>
<dbReference type="SMR" id="A1BI64"/>
<dbReference type="STRING" id="290317.Cpha266_2079"/>
<dbReference type="KEGG" id="cph:Cpha266_2079"/>
<dbReference type="eggNOG" id="COG1212">
    <property type="taxonomic scope" value="Bacteria"/>
</dbReference>
<dbReference type="HOGENOM" id="CLU_065038_0_1_10"/>
<dbReference type="OrthoDB" id="9815559at2"/>
<dbReference type="UniPathway" id="UPA00030"/>
<dbReference type="UniPathway" id="UPA00358">
    <property type="reaction ID" value="UER00476"/>
</dbReference>
<dbReference type="Proteomes" id="UP000008701">
    <property type="component" value="Chromosome"/>
</dbReference>
<dbReference type="GO" id="GO:0005829">
    <property type="term" value="C:cytosol"/>
    <property type="evidence" value="ECO:0007669"/>
    <property type="project" value="TreeGrafter"/>
</dbReference>
<dbReference type="GO" id="GO:0008690">
    <property type="term" value="F:3-deoxy-manno-octulosonate cytidylyltransferase activity"/>
    <property type="evidence" value="ECO:0007669"/>
    <property type="project" value="UniProtKB-UniRule"/>
</dbReference>
<dbReference type="GO" id="GO:0033468">
    <property type="term" value="P:CMP-keto-3-deoxy-D-manno-octulosonic acid biosynthetic process"/>
    <property type="evidence" value="ECO:0007669"/>
    <property type="project" value="UniProtKB-UniRule"/>
</dbReference>
<dbReference type="GO" id="GO:0009103">
    <property type="term" value="P:lipopolysaccharide biosynthetic process"/>
    <property type="evidence" value="ECO:0007669"/>
    <property type="project" value="UniProtKB-UniRule"/>
</dbReference>
<dbReference type="CDD" id="cd02517">
    <property type="entry name" value="CMP-KDO-Synthetase"/>
    <property type="match status" value="1"/>
</dbReference>
<dbReference type="Gene3D" id="3.90.550.10">
    <property type="entry name" value="Spore Coat Polysaccharide Biosynthesis Protein SpsA, Chain A"/>
    <property type="match status" value="1"/>
</dbReference>
<dbReference type="HAMAP" id="MF_00057">
    <property type="entry name" value="KdsB"/>
    <property type="match status" value="1"/>
</dbReference>
<dbReference type="InterPro" id="IPR003329">
    <property type="entry name" value="Cytidylyl_trans"/>
</dbReference>
<dbReference type="InterPro" id="IPR004528">
    <property type="entry name" value="KdsB"/>
</dbReference>
<dbReference type="InterPro" id="IPR029044">
    <property type="entry name" value="Nucleotide-diphossugar_trans"/>
</dbReference>
<dbReference type="NCBIfam" id="TIGR00466">
    <property type="entry name" value="kdsB"/>
    <property type="match status" value="1"/>
</dbReference>
<dbReference type="NCBIfam" id="NF003950">
    <property type="entry name" value="PRK05450.1-3"/>
    <property type="match status" value="1"/>
</dbReference>
<dbReference type="NCBIfam" id="NF003952">
    <property type="entry name" value="PRK05450.1-5"/>
    <property type="match status" value="1"/>
</dbReference>
<dbReference type="NCBIfam" id="NF009905">
    <property type="entry name" value="PRK13368.1"/>
    <property type="match status" value="1"/>
</dbReference>
<dbReference type="PANTHER" id="PTHR42866">
    <property type="entry name" value="3-DEOXY-MANNO-OCTULOSONATE CYTIDYLYLTRANSFERASE"/>
    <property type="match status" value="1"/>
</dbReference>
<dbReference type="PANTHER" id="PTHR42866:SF2">
    <property type="entry name" value="3-DEOXY-MANNO-OCTULOSONATE CYTIDYLYLTRANSFERASE, MITOCHONDRIAL"/>
    <property type="match status" value="1"/>
</dbReference>
<dbReference type="Pfam" id="PF02348">
    <property type="entry name" value="CTP_transf_3"/>
    <property type="match status" value="1"/>
</dbReference>
<dbReference type="SUPFAM" id="SSF53448">
    <property type="entry name" value="Nucleotide-diphospho-sugar transferases"/>
    <property type="match status" value="1"/>
</dbReference>
<reference key="1">
    <citation type="submission" date="2006-12" db="EMBL/GenBank/DDBJ databases">
        <title>Complete sequence of Chlorobium phaeobacteroides DSM 266.</title>
        <authorList>
            <consortium name="US DOE Joint Genome Institute"/>
            <person name="Copeland A."/>
            <person name="Lucas S."/>
            <person name="Lapidus A."/>
            <person name="Barry K."/>
            <person name="Detter J.C."/>
            <person name="Glavina del Rio T."/>
            <person name="Hammon N."/>
            <person name="Israni S."/>
            <person name="Pitluck S."/>
            <person name="Goltsman E."/>
            <person name="Schmutz J."/>
            <person name="Larimer F."/>
            <person name="Land M."/>
            <person name="Hauser L."/>
            <person name="Mikhailova N."/>
            <person name="Li T."/>
            <person name="Overmann J."/>
            <person name="Bryant D.A."/>
            <person name="Richardson P."/>
        </authorList>
    </citation>
    <scope>NUCLEOTIDE SEQUENCE [LARGE SCALE GENOMIC DNA]</scope>
    <source>
        <strain>DSM 266 / SMG 266 / 2430</strain>
    </source>
</reference>
<evidence type="ECO:0000255" key="1">
    <source>
        <dbReference type="HAMAP-Rule" id="MF_00057"/>
    </source>
</evidence>
<comment type="function">
    <text evidence="1">Activates KDO (a required 8-carbon sugar) for incorporation into bacterial lipopolysaccharide in Gram-negative bacteria.</text>
</comment>
<comment type="catalytic activity">
    <reaction evidence="1">
        <text>3-deoxy-alpha-D-manno-oct-2-ulosonate + CTP = CMP-3-deoxy-beta-D-manno-octulosonate + diphosphate</text>
        <dbReference type="Rhea" id="RHEA:23448"/>
        <dbReference type="ChEBI" id="CHEBI:33019"/>
        <dbReference type="ChEBI" id="CHEBI:37563"/>
        <dbReference type="ChEBI" id="CHEBI:85986"/>
        <dbReference type="ChEBI" id="CHEBI:85987"/>
        <dbReference type="EC" id="2.7.7.38"/>
    </reaction>
</comment>
<comment type="pathway">
    <text evidence="1">Nucleotide-sugar biosynthesis; CMP-3-deoxy-D-manno-octulosonate biosynthesis; CMP-3-deoxy-D-manno-octulosonate from 3-deoxy-D-manno-octulosonate and CTP: step 1/1.</text>
</comment>
<comment type="pathway">
    <text evidence="1">Bacterial outer membrane biogenesis; lipopolysaccharide biosynthesis.</text>
</comment>
<comment type="subcellular location">
    <subcellularLocation>
        <location evidence="1">Cytoplasm</location>
    </subcellularLocation>
</comment>
<comment type="similarity">
    <text evidence="1">Belongs to the KdsB family.</text>
</comment>
<proteinExistence type="inferred from homology"/>
<feature type="chain" id="PRO_1000116886" description="3-deoxy-manno-octulosonate cytidylyltransferase">
    <location>
        <begin position="1"/>
        <end position="247"/>
    </location>
</feature>
<name>KDSB_CHLPD</name>
<organism>
    <name type="scientific">Chlorobium phaeobacteroides (strain DSM 266 / SMG 266 / 2430)</name>
    <dbReference type="NCBI Taxonomy" id="290317"/>
    <lineage>
        <taxon>Bacteria</taxon>
        <taxon>Pseudomonadati</taxon>
        <taxon>Chlorobiota</taxon>
        <taxon>Chlorobiia</taxon>
        <taxon>Chlorobiales</taxon>
        <taxon>Chlorobiaceae</taxon>
        <taxon>Chlorobium/Pelodictyon group</taxon>
        <taxon>Chlorobium</taxon>
    </lineage>
</organism>